<accession>A6QFX0</accession>
<comment type="function">
    <text evidence="1">Catalyzes the conversion of heme O to heme A by two successive hydroxylations of the methyl group at C8. The first hydroxylation forms heme I, the second hydroxylation results in an unstable dihydroxymethyl group, which spontaneously dehydrates, resulting in the formyl group of heme A.</text>
</comment>
<comment type="catalytic activity">
    <reaction evidence="1">
        <text>Fe(II)-heme o + 2 A + H2O = Fe(II)-heme a + 2 AH2</text>
        <dbReference type="Rhea" id="RHEA:63388"/>
        <dbReference type="ChEBI" id="CHEBI:13193"/>
        <dbReference type="ChEBI" id="CHEBI:15377"/>
        <dbReference type="ChEBI" id="CHEBI:17499"/>
        <dbReference type="ChEBI" id="CHEBI:60530"/>
        <dbReference type="ChEBI" id="CHEBI:61715"/>
        <dbReference type="EC" id="1.17.99.9"/>
    </reaction>
    <physiologicalReaction direction="left-to-right" evidence="1">
        <dbReference type="Rhea" id="RHEA:63389"/>
    </physiologicalReaction>
</comment>
<comment type="cofactor">
    <cofactor evidence="1">
        <name>heme b</name>
        <dbReference type="ChEBI" id="CHEBI:60344"/>
    </cofactor>
</comment>
<comment type="pathway">
    <text evidence="1">Porphyrin-containing compound metabolism; heme A biosynthesis; heme A from heme O: step 1/1.</text>
</comment>
<comment type="subunit">
    <text evidence="1">Interacts with CtaB.</text>
</comment>
<comment type="subcellular location">
    <subcellularLocation>
        <location evidence="1">Cell membrane</location>
        <topology evidence="1">Multi-pass membrane protein</topology>
    </subcellularLocation>
</comment>
<comment type="domain">
    <text evidence="1">The N-half (TM1-TM4) and C-half (TM5-TM8) domains are connected by an intracellular loop. Each domain is formed from four-helix bundles and they align in a pseudo twofold symmetry manner. The N-half domain is the substrate-heme O binding domain and the C-half domain is the cofactor heme B binding domain.</text>
</comment>
<comment type="domain">
    <text evidence="1">The cysteines of disulfide bond Cys-37 and Cys-44 may be involved in transfer of reducing equivalents from quinol in the membrane to the active site of the enzyme.</text>
</comment>
<comment type="similarity">
    <text evidence="1">Belongs to the COX15/CtaA family. Type 1 subfamily.</text>
</comment>
<comment type="sequence caution" evidence="2">
    <conflict type="erroneous initiation">
        <sequence resource="EMBL-CDS" id="BAF67252"/>
    </conflict>
</comment>
<proteinExistence type="inferred from homology"/>
<gene>
    <name evidence="1" type="primary">ctaA</name>
    <name type="ordered locus">NWMN_0980</name>
</gene>
<sequence>MFGKKNLKWLGVVATLMMTFVQLGGALVTKTGSADGCGSSWPLCHGALIPEFFPIDTIIELSHRAVSALSLLMVLWLVITAWKHIGYIKEIKPLSIISVGFLLLQALIGAAAVIWQQNDYVLALHFGISLISFSSVFLITLIIFSIDQKYEADELYIKKPLRRLTWLMAIIIYCGVYTGALVRHADASLAYGGWPLPFHDLVPHSEQDWVQLTHRIMAFIVFTIIMITYIHAVKNYPNNRTVHYGYTAAFILVILQVITGALSIMTNVNLIIALFHALFITYLFGMTTYFIMLMLRSVRSDKQ</sequence>
<dbReference type="EC" id="1.17.99.9" evidence="1"/>
<dbReference type="EMBL" id="AP009351">
    <property type="protein sequence ID" value="BAF67252.1"/>
    <property type="status" value="ALT_INIT"/>
    <property type="molecule type" value="Genomic_DNA"/>
</dbReference>
<dbReference type="RefSeq" id="WP_000467123.1">
    <property type="nucleotide sequence ID" value="NZ_JBBIAE010000002.1"/>
</dbReference>
<dbReference type="SMR" id="A6QFX0"/>
<dbReference type="KEGG" id="sae:NWMN_0980"/>
<dbReference type="HOGENOM" id="CLU_041525_3_1_9"/>
<dbReference type="UniPathway" id="UPA00269">
    <property type="reaction ID" value="UER00713"/>
</dbReference>
<dbReference type="Proteomes" id="UP000006386">
    <property type="component" value="Chromosome"/>
</dbReference>
<dbReference type="GO" id="GO:0005886">
    <property type="term" value="C:plasma membrane"/>
    <property type="evidence" value="ECO:0007669"/>
    <property type="project" value="UniProtKB-SubCell"/>
</dbReference>
<dbReference type="GO" id="GO:0046872">
    <property type="term" value="F:metal ion binding"/>
    <property type="evidence" value="ECO:0007669"/>
    <property type="project" value="UniProtKB-KW"/>
</dbReference>
<dbReference type="GO" id="GO:0016653">
    <property type="term" value="F:oxidoreductase activity, acting on NAD(P)H, heme protein as acceptor"/>
    <property type="evidence" value="ECO:0007669"/>
    <property type="project" value="InterPro"/>
</dbReference>
<dbReference type="GO" id="GO:0006784">
    <property type="term" value="P:heme A biosynthetic process"/>
    <property type="evidence" value="ECO:0007669"/>
    <property type="project" value="UniProtKB-UniRule"/>
</dbReference>
<dbReference type="HAMAP" id="MF_01664">
    <property type="entry name" value="HemeA_synth_type1"/>
    <property type="match status" value="1"/>
</dbReference>
<dbReference type="InterPro" id="IPR003780">
    <property type="entry name" value="COX15/CtaA_fam"/>
</dbReference>
<dbReference type="InterPro" id="IPR050450">
    <property type="entry name" value="COX15/CtaA_HemeA_synthase"/>
</dbReference>
<dbReference type="InterPro" id="IPR023755">
    <property type="entry name" value="HemeA_Synthase_type1"/>
</dbReference>
<dbReference type="PANTHER" id="PTHR35457">
    <property type="entry name" value="HEME A SYNTHASE"/>
    <property type="match status" value="1"/>
</dbReference>
<dbReference type="PANTHER" id="PTHR35457:SF1">
    <property type="entry name" value="HEME A SYNTHASE"/>
    <property type="match status" value="1"/>
</dbReference>
<dbReference type="Pfam" id="PF02628">
    <property type="entry name" value="COX15-CtaA"/>
    <property type="match status" value="1"/>
</dbReference>
<feature type="chain" id="PRO_0000348998" description="Heme A synthase">
    <location>
        <begin position="1"/>
        <end position="303"/>
    </location>
</feature>
<feature type="topological domain" description="Cytoplasmic" evidence="1">
    <location>
        <begin position="1"/>
        <end position="8"/>
    </location>
</feature>
<feature type="transmembrane region" description="Helical" evidence="1">
    <location>
        <begin position="9"/>
        <end position="29"/>
    </location>
</feature>
<feature type="topological domain" description="Extracellular" evidence="1">
    <location>
        <begin position="30"/>
        <end position="67"/>
    </location>
</feature>
<feature type="transmembrane region" description="Helical" evidence="1">
    <location>
        <begin position="68"/>
        <end position="88"/>
    </location>
</feature>
<feature type="topological domain" description="Cytoplasmic" evidence="1">
    <location>
        <begin position="89"/>
        <end position="93"/>
    </location>
</feature>
<feature type="transmembrane region" description="Helical" evidence="1">
    <location>
        <begin position="94"/>
        <end position="114"/>
    </location>
</feature>
<feature type="topological domain" description="Extracellular" evidence="1">
    <location>
        <begin position="115"/>
        <end position="125"/>
    </location>
</feature>
<feature type="transmembrane region" description="Helical" evidence="1">
    <location>
        <begin position="126"/>
        <end position="146"/>
    </location>
</feature>
<feature type="topological domain" description="Cytoplasmic" evidence="1">
    <location>
        <begin position="147"/>
        <end position="163"/>
    </location>
</feature>
<feature type="transmembrane region" description="Helical" evidence="1">
    <location>
        <begin position="164"/>
        <end position="184"/>
    </location>
</feature>
<feature type="topological domain" description="Extracellular" evidence="1">
    <location>
        <begin position="185"/>
        <end position="215"/>
    </location>
</feature>
<feature type="transmembrane region" description="Helical" evidence="1">
    <location>
        <begin position="216"/>
        <end position="236"/>
    </location>
</feature>
<feature type="topological domain" description="Cytoplasmic" evidence="1">
    <location>
        <begin position="237"/>
        <end position="244"/>
    </location>
</feature>
<feature type="transmembrane region" description="Helical" evidence="1">
    <location>
        <begin position="245"/>
        <end position="265"/>
    </location>
</feature>
<feature type="topological domain" description="Extracellular" evidence="1">
    <location>
        <begin position="266"/>
        <end position="270"/>
    </location>
</feature>
<feature type="transmembrane region" description="Helical" evidence="1">
    <location>
        <begin position="271"/>
        <end position="291"/>
    </location>
</feature>
<feature type="topological domain" description="Cytoplasmic" evidence="1">
    <location>
        <begin position="292"/>
        <end position="303"/>
    </location>
</feature>
<feature type="active site" evidence="1">
    <location>
        <position position="60"/>
    </location>
</feature>
<feature type="binding site" description="axial binding residue" evidence="1">
    <location>
        <position position="63"/>
    </location>
    <ligand>
        <name>heme o</name>
        <dbReference type="ChEBI" id="CHEBI:24480"/>
    </ligand>
    <ligandPart>
        <name>Fe</name>
        <dbReference type="ChEBI" id="CHEBI:18248"/>
    </ligandPart>
</feature>
<feature type="binding site" description="axial binding residue" evidence="1">
    <location>
        <position position="125"/>
    </location>
    <ligand>
        <name>heme o</name>
        <dbReference type="ChEBI" id="CHEBI:24480"/>
    </ligand>
    <ligandPart>
        <name>Fe</name>
        <dbReference type="ChEBI" id="CHEBI:18248"/>
    </ligandPart>
</feature>
<feature type="binding site" description="axial binding residue" evidence="1">
    <location>
        <position position="214"/>
    </location>
    <ligand>
        <name>heme b</name>
        <dbReference type="ChEBI" id="CHEBI:60344"/>
    </ligand>
    <ligandPart>
        <name>Fe</name>
        <dbReference type="ChEBI" id="CHEBI:18248"/>
    </ligandPart>
</feature>
<feature type="binding site" description="axial binding residue" evidence="1">
    <location>
        <position position="276"/>
    </location>
    <ligand>
        <name>heme b</name>
        <dbReference type="ChEBI" id="CHEBI:60344"/>
    </ligand>
    <ligandPart>
        <name>Fe</name>
        <dbReference type="ChEBI" id="CHEBI:18248"/>
    </ligandPart>
</feature>
<feature type="disulfide bond" description="Essential for catalytic activity" evidence="1">
    <location>
        <begin position="37"/>
        <end position="44"/>
    </location>
</feature>
<evidence type="ECO:0000255" key="1">
    <source>
        <dbReference type="HAMAP-Rule" id="MF_01664"/>
    </source>
</evidence>
<evidence type="ECO:0000305" key="2"/>
<name>CTAA_STAAE</name>
<protein>
    <recommendedName>
        <fullName evidence="1">Heme A synthase</fullName>
        <shortName evidence="1">HAS</shortName>
        <ecNumber evidence="1">1.17.99.9</ecNumber>
    </recommendedName>
    <alternativeName>
        <fullName evidence="1">Cytochrome aa3-controlling protein</fullName>
    </alternativeName>
</protein>
<organism>
    <name type="scientific">Staphylococcus aureus (strain Newman)</name>
    <dbReference type="NCBI Taxonomy" id="426430"/>
    <lineage>
        <taxon>Bacteria</taxon>
        <taxon>Bacillati</taxon>
        <taxon>Bacillota</taxon>
        <taxon>Bacilli</taxon>
        <taxon>Bacillales</taxon>
        <taxon>Staphylococcaceae</taxon>
        <taxon>Staphylococcus</taxon>
    </lineage>
</organism>
<keyword id="KW-1003">Cell membrane</keyword>
<keyword id="KW-1015">Disulfide bond</keyword>
<keyword id="KW-0350">Heme biosynthesis</keyword>
<keyword id="KW-0408">Iron</keyword>
<keyword id="KW-0472">Membrane</keyword>
<keyword id="KW-0479">Metal-binding</keyword>
<keyword id="KW-0560">Oxidoreductase</keyword>
<keyword id="KW-0812">Transmembrane</keyword>
<keyword id="KW-1133">Transmembrane helix</keyword>
<reference key="1">
    <citation type="journal article" date="2008" name="J. Bacteriol.">
        <title>Genome sequence of Staphylococcus aureus strain Newman and comparative analysis of staphylococcal genomes: polymorphism and evolution of two major pathogenicity islands.</title>
        <authorList>
            <person name="Baba T."/>
            <person name="Bae T."/>
            <person name="Schneewind O."/>
            <person name="Takeuchi F."/>
            <person name="Hiramatsu K."/>
        </authorList>
    </citation>
    <scope>NUCLEOTIDE SEQUENCE [LARGE SCALE GENOMIC DNA]</scope>
    <source>
        <strain>Newman</strain>
    </source>
</reference>